<keyword id="KW-0025">Alternative splicing</keyword>
<keyword id="KW-0053">Apoptosis</keyword>
<keyword id="KW-0597">Phosphoprotein</keyword>
<keyword id="KW-1267">Proteomics identification</keyword>
<keyword id="KW-1185">Reference proteome</keyword>
<keyword id="KW-0727">SH2 domain</keyword>
<proteinExistence type="evidence at protein level"/>
<reference evidence="7 9" key="1">
    <citation type="journal article" date="2000" name="Biochem. Biophys. Res. Commun.">
        <title>Shf, a Shb-like adapter protein, is involved in PDGF-alpha-receptor regulation of apoptosis.</title>
        <authorList>
            <person name="Lindholm C.K."/>
            <person name="Frantz J.D."/>
            <person name="Shoelson S.E."/>
            <person name="Welsh M."/>
        </authorList>
    </citation>
    <scope>NUCLEOTIDE SEQUENCE [MRNA] (ISOFORM 1)</scope>
    <scope>FUNCTION</scope>
    <scope>INTERACTION WITH PDGFA</scope>
    <scope>TISSUE SPECIFICITY</scope>
    <scope>PHOSPHORYLATION</scope>
    <source>
        <tissue evidence="4">Skeletal muscle</tissue>
    </source>
</reference>
<reference key="2">
    <citation type="journal article" date="2006" name="Nature">
        <title>Analysis of the DNA sequence and duplication history of human chromosome 15.</title>
        <authorList>
            <person name="Zody M.C."/>
            <person name="Garber M."/>
            <person name="Sharpe T."/>
            <person name="Young S.K."/>
            <person name="Rowen L."/>
            <person name="O'Neill K."/>
            <person name="Whittaker C.A."/>
            <person name="Kamal M."/>
            <person name="Chang J.L."/>
            <person name="Cuomo C.A."/>
            <person name="Dewar K."/>
            <person name="FitzGerald M.G."/>
            <person name="Kodira C.D."/>
            <person name="Madan A."/>
            <person name="Qin S."/>
            <person name="Yang X."/>
            <person name="Abbasi N."/>
            <person name="Abouelleil A."/>
            <person name="Arachchi H.M."/>
            <person name="Baradarani L."/>
            <person name="Birditt B."/>
            <person name="Bloom S."/>
            <person name="Bloom T."/>
            <person name="Borowsky M.L."/>
            <person name="Burke J."/>
            <person name="Butler J."/>
            <person name="Cook A."/>
            <person name="DeArellano K."/>
            <person name="DeCaprio D."/>
            <person name="Dorris L. III"/>
            <person name="Dors M."/>
            <person name="Eichler E.E."/>
            <person name="Engels R."/>
            <person name="Fahey J."/>
            <person name="Fleetwood P."/>
            <person name="Friedman C."/>
            <person name="Gearin G."/>
            <person name="Hall J.L."/>
            <person name="Hensley G."/>
            <person name="Johnson E."/>
            <person name="Jones C."/>
            <person name="Kamat A."/>
            <person name="Kaur A."/>
            <person name="Locke D.P."/>
            <person name="Madan A."/>
            <person name="Munson G."/>
            <person name="Jaffe D.B."/>
            <person name="Lui A."/>
            <person name="Macdonald P."/>
            <person name="Mauceli E."/>
            <person name="Naylor J.W."/>
            <person name="Nesbitt R."/>
            <person name="Nicol R."/>
            <person name="O'Leary S.B."/>
            <person name="Ratcliffe A."/>
            <person name="Rounsley S."/>
            <person name="She X."/>
            <person name="Sneddon K.M.B."/>
            <person name="Stewart S."/>
            <person name="Sougnez C."/>
            <person name="Stone S.M."/>
            <person name="Topham K."/>
            <person name="Vincent D."/>
            <person name="Wang S."/>
            <person name="Zimmer A.R."/>
            <person name="Birren B.W."/>
            <person name="Hood L."/>
            <person name="Lander E.S."/>
            <person name="Nusbaum C."/>
        </authorList>
    </citation>
    <scope>NUCLEOTIDE SEQUENCE [LARGE SCALE GENOMIC DNA]</scope>
</reference>
<reference evidence="7 8" key="3">
    <citation type="journal article" date="2004" name="Genome Res.">
        <title>The status, quality, and expansion of the NIH full-length cDNA project: the Mammalian Gene Collection (MGC).</title>
        <authorList>
            <consortium name="The MGC Project Team"/>
        </authorList>
    </citation>
    <scope>NUCLEOTIDE SEQUENCE [LARGE SCALE MRNA] OF 144-423 (ISOFORM 2)</scope>
    <source>
        <tissue evidence="8">Neuroblastoma</tissue>
    </source>
</reference>
<feature type="chain" id="PRO_0000322558" description="SH2 domain-containing adapter protein F">
    <location>
        <begin position="1"/>
        <end position="423"/>
    </location>
</feature>
<feature type="domain" description="SH2" evidence="2">
    <location>
        <begin position="323"/>
        <end position="418"/>
    </location>
</feature>
<feature type="region of interest" description="Disordered" evidence="3">
    <location>
        <begin position="1"/>
        <end position="87"/>
    </location>
</feature>
<feature type="region of interest" description="Disordered" evidence="3">
    <location>
        <begin position="110"/>
        <end position="208"/>
    </location>
</feature>
<feature type="region of interest" description="Disordered" evidence="3">
    <location>
        <begin position="225"/>
        <end position="312"/>
    </location>
</feature>
<feature type="compositionally biased region" description="Acidic residues" evidence="3">
    <location>
        <begin position="192"/>
        <end position="203"/>
    </location>
</feature>
<feature type="modified residue" description="Phosphotyrosine" evidence="1">
    <location>
        <position position="201"/>
    </location>
</feature>
<feature type="splice variant" id="VSP_052699" description="In isoform 2." evidence="6">
    <location>
        <begin position="218"/>
        <end position="264"/>
    </location>
</feature>
<feature type="sequence conflict" description="In Ref. 3; AAH07586." evidence="7" ref="3">
    <original>A</original>
    <variation>P</variation>
    <location>
        <position position="177"/>
    </location>
</feature>
<feature type="sequence conflict" description="In Ref. 1; no nucleotide entry." evidence="7" ref="1">
    <original>EH</original>
    <variation>NN</variation>
    <location>
        <begin position="377"/>
        <end position="378"/>
    </location>
</feature>
<comment type="function">
    <text evidence="4">Adapter protein which may play a role in the regulation of apoptosis in response to PDGF.</text>
</comment>
<comment type="subunit">
    <text evidence="4">Interacts with phosphorylated 'Tyr-720' of PDGFRA via its SH2 domain.</text>
</comment>
<comment type="alternative products">
    <event type="alternative splicing"/>
    <isoform>
        <id>Q7M4L6-1</id>
        <name evidence="4">1</name>
        <sequence type="displayed"/>
    </isoform>
    <isoform>
        <id>Q7M4L6-2</id>
        <name evidence="5">2</name>
        <sequence type="described" ref="VSP_052699"/>
    </isoform>
</comment>
<comment type="tissue specificity">
    <text evidence="4">Expressed in skeletal muscle, brain, liver, prostate, testis, ovary, small intestine and colon.</text>
</comment>
<comment type="PTM">
    <text evidence="4">May become phosphorylated upon binding to PDGFRA.</text>
</comment>
<comment type="miscellaneous">
    <text>The sequence described in PubMed:11095946 is over-extended by 57 aa at the N-terminus due to the presence of an uncorrected 5' mismatch compared to the reference genome sequence.</text>
</comment>
<sequence>MQQEGGPVRSAPCRTGTLEGSRQGSPGHRKRASPKGSLSSAQPHSWMLTPSPLNSHCAHREPISSSPQPVANGPKQKKKSNWRSTTRLRIIRLRDRLEPRPLAILEDYADPFDVQETGEGSAGASGAPEKVPENDGYMEPYEAQKMMAEIRGSKETATQPLPLYDTPYEPEEDGATAEGEGAPWPRESRLPEDDERPPEEYDQPWEWKKERISKAFAVDIKVIKDLPWPPPVGQLDSSPSLPDGDRDISGPASPLPEPSLEDSSAQFEGPEKSCLSPGREEKGRLPPRLSAGNPKSAKPLSMEPSSPLGEWTDPALPLENQVWYHGAISRTDAENLLRLCKEASYLVRNSETSKNDFSLSLKSSQGFMHMKLSRTKEHKYVLGQNSPPFSSVPEIVHHYASRKLPIKGAEHMSLLYPVAIRTL</sequence>
<organism>
    <name type="scientific">Homo sapiens</name>
    <name type="common">Human</name>
    <dbReference type="NCBI Taxonomy" id="9606"/>
    <lineage>
        <taxon>Eukaryota</taxon>
        <taxon>Metazoa</taxon>
        <taxon>Chordata</taxon>
        <taxon>Craniata</taxon>
        <taxon>Vertebrata</taxon>
        <taxon>Euteleostomi</taxon>
        <taxon>Mammalia</taxon>
        <taxon>Eutheria</taxon>
        <taxon>Euarchontoglires</taxon>
        <taxon>Primates</taxon>
        <taxon>Haplorrhini</taxon>
        <taxon>Catarrhini</taxon>
        <taxon>Hominidae</taxon>
        <taxon>Homo</taxon>
    </lineage>
</organism>
<name>SHF_HUMAN</name>
<evidence type="ECO:0000250" key="1">
    <source>
        <dbReference type="UniProtKB" id="Q8CG80"/>
    </source>
</evidence>
<evidence type="ECO:0000255" key="2">
    <source>
        <dbReference type="PROSITE-ProRule" id="PRU00191"/>
    </source>
</evidence>
<evidence type="ECO:0000256" key="3">
    <source>
        <dbReference type="SAM" id="MobiDB-lite"/>
    </source>
</evidence>
<evidence type="ECO:0000269" key="4">
    <source>
    </source>
</evidence>
<evidence type="ECO:0000269" key="5">
    <source>
    </source>
</evidence>
<evidence type="ECO:0000303" key="6">
    <source>
    </source>
</evidence>
<evidence type="ECO:0000305" key="7"/>
<evidence type="ECO:0000312" key="8">
    <source>
        <dbReference type="EMBL" id="AAH07586.1"/>
    </source>
</evidence>
<evidence type="ECO:0000312" key="9">
    <source>
        <dbReference type="PIR" id="JC7552"/>
    </source>
</evidence>
<protein>
    <recommendedName>
        <fullName>SH2 domain-containing adapter protein F</fullName>
    </recommendedName>
</protein>
<gene>
    <name evidence="8" type="primary">SHF</name>
</gene>
<dbReference type="EMBL" id="AC051619">
    <property type="status" value="NOT_ANNOTATED_CDS"/>
    <property type="molecule type" value="Genomic_DNA"/>
</dbReference>
<dbReference type="EMBL" id="BC007586">
    <property type="protein sequence ID" value="AAH07586.1"/>
    <property type="molecule type" value="mRNA"/>
</dbReference>
<dbReference type="CCDS" id="CCDS10120.2">
    <molecule id="Q7M4L6-1"/>
</dbReference>
<dbReference type="PIR" id="JC7552">
    <property type="entry name" value="JC7552"/>
</dbReference>
<dbReference type="RefSeq" id="NP_612365.3">
    <molecule id="Q7M4L6-1"/>
    <property type="nucleotide sequence ID" value="NM_138356.3"/>
</dbReference>
<dbReference type="RefSeq" id="XP_047289241.1">
    <molecule id="Q7M4L6-2"/>
    <property type="nucleotide sequence ID" value="XM_047433285.1"/>
</dbReference>
<dbReference type="SMR" id="Q7M4L6"/>
<dbReference type="BioGRID" id="124730">
    <property type="interactions" value="3"/>
</dbReference>
<dbReference type="FunCoup" id="Q7M4L6">
    <property type="interactions" value="594"/>
</dbReference>
<dbReference type="IntAct" id="Q7M4L6">
    <property type="interactions" value="38"/>
</dbReference>
<dbReference type="STRING" id="9606.ENSP00000290894"/>
<dbReference type="iPTMnet" id="Q7M4L6"/>
<dbReference type="PhosphoSitePlus" id="Q7M4L6"/>
<dbReference type="BioMuta" id="SHF"/>
<dbReference type="DMDM" id="308153498"/>
<dbReference type="MassIVE" id="Q7M4L6"/>
<dbReference type="PaxDb" id="9606-ENSP00000290894"/>
<dbReference type="PeptideAtlas" id="Q7M4L6"/>
<dbReference type="ProteomicsDB" id="68869">
    <molecule id="Q7M4L6-1"/>
</dbReference>
<dbReference type="ProteomicsDB" id="68870">
    <molecule id="Q7M4L6-2"/>
</dbReference>
<dbReference type="Antibodypedia" id="42470">
    <property type="antibodies" value="109 antibodies from 19 providers"/>
</dbReference>
<dbReference type="Ensembl" id="ENST00000290894.12">
    <molecule id="Q7M4L6-1"/>
    <property type="protein sequence ID" value="ENSP00000290894.8"/>
    <property type="gene ID" value="ENSG00000138606.20"/>
</dbReference>
<dbReference type="GeneID" id="90525"/>
<dbReference type="UCSC" id="uc001zuy.3">
    <molecule id="Q7M4L6-1"/>
    <property type="organism name" value="human"/>
</dbReference>
<dbReference type="AGR" id="HGNC:25116"/>
<dbReference type="GeneCards" id="SHF"/>
<dbReference type="HGNC" id="HGNC:25116">
    <property type="gene designation" value="SHF"/>
</dbReference>
<dbReference type="HPA" id="ENSG00000138606">
    <property type="expression patterns" value="Tissue enriched (brain)"/>
</dbReference>
<dbReference type="neXtProt" id="NX_Q7M4L6"/>
<dbReference type="OpenTargets" id="ENSG00000138606"/>
<dbReference type="VEuPathDB" id="HostDB:ENSG00000138606"/>
<dbReference type="eggNOG" id="ENOG502QTRD">
    <property type="taxonomic scope" value="Eukaryota"/>
</dbReference>
<dbReference type="GeneTree" id="ENSGT00940000159452"/>
<dbReference type="InParanoid" id="Q7M4L6"/>
<dbReference type="OrthoDB" id="5914531at2759"/>
<dbReference type="PAN-GO" id="Q7M4L6">
    <property type="GO annotations" value="1 GO annotation based on evolutionary models"/>
</dbReference>
<dbReference type="PhylomeDB" id="Q7M4L6"/>
<dbReference type="TreeFam" id="TF325799"/>
<dbReference type="PathwayCommons" id="Q7M4L6"/>
<dbReference type="SignaLink" id="Q7M4L6"/>
<dbReference type="ChiTaRS" id="SHF">
    <property type="organism name" value="human"/>
</dbReference>
<dbReference type="Pharos" id="Q7M4L6">
    <property type="development level" value="Tbio"/>
</dbReference>
<dbReference type="PRO" id="PR:Q7M4L6"/>
<dbReference type="Proteomes" id="UP000005640">
    <property type="component" value="Chromosome 15"/>
</dbReference>
<dbReference type="RNAct" id="Q7M4L6">
    <property type="molecule type" value="protein"/>
</dbReference>
<dbReference type="Bgee" id="ENSG00000138606">
    <property type="expression patterns" value="Expressed in cerebellar hemisphere and 113 other cell types or tissues"/>
</dbReference>
<dbReference type="ExpressionAtlas" id="Q7M4L6">
    <property type="expression patterns" value="baseline and differential"/>
</dbReference>
<dbReference type="GO" id="GO:0001784">
    <property type="term" value="F:phosphotyrosine residue binding"/>
    <property type="evidence" value="ECO:0000318"/>
    <property type="project" value="GO_Central"/>
</dbReference>
<dbReference type="GO" id="GO:0006915">
    <property type="term" value="P:apoptotic process"/>
    <property type="evidence" value="ECO:0007669"/>
    <property type="project" value="UniProtKB-KW"/>
</dbReference>
<dbReference type="CDD" id="cd10392">
    <property type="entry name" value="SH2_SHF"/>
    <property type="match status" value="1"/>
</dbReference>
<dbReference type="FunFam" id="3.30.505.10:FF:000021">
    <property type="entry name" value="Putative SH2 domain-containing adapter protein F"/>
    <property type="match status" value="1"/>
</dbReference>
<dbReference type="Gene3D" id="3.30.505.10">
    <property type="entry name" value="SH2 domain"/>
    <property type="match status" value="1"/>
</dbReference>
<dbReference type="InterPro" id="IPR000980">
    <property type="entry name" value="SH2"/>
</dbReference>
<dbReference type="InterPro" id="IPR036860">
    <property type="entry name" value="SH2_dom_sf"/>
</dbReference>
<dbReference type="InterPro" id="IPR051846">
    <property type="entry name" value="SH2_domain_adapters"/>
</dbReference>
<dbReference type="InterPro" id="IPR035044">
    <property type="entry name" value="SHF_SH2"/>
</dbReference>
<dbReference type="PANTHER" id="PTHR15127">
    <property type="entry name" value="HEAVYWEIGHT, ISOFORM A"/>
    <property type="match status" value="1"/>
</dbReference>
<dbReference type="PANTHER" id="PTHR15127:SF28">
    <property type="entry name" value="SH2 DOMAIN-CONTAINING ADAPTER PROTEIN F"/>
    <property type="match status" value="1"/>
</dbReference>
<dbReference type="Pfam" id="PF00017">
    <property type="entry name" value="SH2"/>
    <property type="match status" value="1"/>
</dbReference>
<dbReference type="PRINTS" id="PR00401">
    <property type="entry name" value="SH2DOMAIN"/>
</dbReference>
<dbReference type="SMART" id="SM00252">
    <property type="entry name" value="SH2"/>
    <property type="match status" value="1"/>
</dbReference>
<dbReference type="SUPFAM" id="SSF52374">
    <property type="entry name" value="Nucleotidylyl transferase"/>
    <property type="match status" value="1"/>
</dbReference>
<dbReference type="SUPFAM" id="SSF55550">
    <property type="entry name" value="SH2 domain"/>
    <property type="match status" value="1"/>
</dbReference>
<dbReference type="PROSITE" id="PS50001">
    <property type="entry name" value="SH2"/>
    <property type="match status" value="1"/>
</dbReference>
<accession>Q7M4L6</accession>
<accession>Q96IE8</accession>